<comment type="function">
    <text evidence="1">Involved in the modulation of the specificity of the ClpAP-mediated ATP-dependent protein degradation.</text>
</comment>
<comment type="subunit">
    <text evidence="1">Binds to the N-terminal domain of the chaperone ClpA.</text>
</comment>
<comment type="similarity">
    <text evidence="1">Belongs to the ClpS family.</text>
</comment>
<name>CLPS_RALN1</name>
<dbReference type="EMBL" id="AL646052">
    <property type="protein sequence ID" value="CAD16172.1"/>
    <property type="molecule type" value="Genomic_DNA"/>
</dbReference>
<dbReference type="RefSeq" id="WP_011002382.1">
    <property type="nucleotide sequence ID" value="NC_003295.1"/>
</dbReference>
<dbReference type="SMR" id="Q8XWK9"/>
<dbReference type="STRING" id="267608.RSc2465"/>
<dbReference type="EnsemblBacteria" id="CAD16172">
    <property type="protein sequence ID" value="CAD16172"/>
    <property type="gene ID" value="RSc2465"/>
</dbReference>
<dbReference type="GeneID" id="93851715"/>
<dbReference type="KEGG" id="rso:RSc2465"/>
<dbReference type="eggNOG" id="COG2127">
    <property type="taxonomic scope" value="Bacteria"/>
</dbReference>
<dbReference type="HOGENOM" id="CLU_134358_2_1_4"/>
<dbReference type="Proteomes" id="UP000001436">
    <property type="component" value="Chromosome"/>
</dbReference>
<dbReference type="GO" id="GO:0030163">
    <property type="term" value="P:protein catabolic process"/>
    <property type="evidence" value="ECO:0007669"/>
    <property type="project" value="InterPro"/>
</dbReference>
<dbReference type="GO" id="GO:0006508">
    <property type="term" value="P:proteolysis"/>
    <property type="evidence" value="ECO:0007669"/>
    <property type="project" value="UniProtKB-UniRule"/>
</dbReference>
<dbReference type="FunFam" id="3.30.1390.10:FF:000002">
    <property type="entry name" value="ATP-dependent Clp protease adapter protein ClpS"/>
    <property type="match status" value="1"/>
</dbReference>
<dbReference type="Gene3D" id="3.30.1390.10">
    <property type="match status" value="1"/>
</dbReference>
<dbReference type="HAMAP" id="MF_00302">
    <property type="entry name" value="ClpS"/>
    <property type="match status" value="1"/>
</dbReference>
<dbReference type="InterPro" id="IPR022935">
    <property type="entry name" value="ClpS"/>
</dbReference>
<dbReference type="InterPro" id="IPR003769">
    <property type="entry name" value="ClpS_core"/>
</dbReference>
<dbReference type="InterPro" id="IPR014719">
    <property type="entry name" value="Ribosomal_bL12_C/ClpS-like"/>
</dbReference>
<dbReference type="NCBIfam" id="NF000672">
    <property type="entry name" value="PRK00033.1-5"/>
    <property type="match status" value="1"/>
</dbReference>
<dbReference type="PANTHER" id="PTHR33473:SF19">
    <property type="entry name" value="ATP-DEPENDENT CLP PROTEASE ADAPTER PROTEIN CLPS"/>
    <property type="match status" value="1"/>
</dbReference>
<dbReference type="PANTHER" id="PTHR33473">
    <property type="entry name" value="ATP-DEPENDENT CLP PROTEASE ADAPTER PROTEIN CLPS1, CHLOROPLASTIC"/>
    <property type="match status" value="1"/>
</dbReference>
<dbReference type="Pfam" id="PF02617">
    <property type="entry name" value="ClpS"/>
    <property type="match status" value="1"/>
</dbReference>
<dbReference type="SUPFAM" id="SSF54736">
    <property type="entry name" value="ClpS-like"/>
    <property type="match status" value="1"/>
</dbReference>
<reference key="1">
    <citation type="journal article" date="2002" name="Nature">
        <title>Genome sequence of the plant pathogen Ralstonia solanacearum.</title>
        <authorList>
            <person name="Salanoubat M."/>
            <person name="Genin S."/>
            <person name="Artiguenave F."/>
            <person name="Gouzy J."/>
            <person name="Mangenot S."/>
            <person name="Arlat M."/>
            <person name="Billault A."/>
            <person name="Brottier P."/>
            <person name="Camus J.-C."/>
            <person name="Cattolico L."/>
            <person name="Chandler M."/>
            <person name="Choisne N."/>
            <person name="Claudel-Renard C."/>
            <person name="Cunnac S."/>
            <person name="Demange N."/>
            <person name="Gaspin C."/>
            <person name="Lavie M."/>
            <person name="Moisan A."/>
            <person name="Robert C."/>
            <person name="Saurin W."/>
            <person name="Schiex T."/>
            <person name="Siguier P."/>
            <person name="Thebault P."/>
            <person name="Whalen M."/>
            <person name="Wincker P."/>
            <person name="Levy M."/>
            <person name="Weissenbach J."/>
            <person name="Boucher C.A."/>
        </authorList>
    </citation>
    <scope>NUCLEOTIDE SEQUENCE [LARGE SCALE GENOMIC DNA]</scope>
    <source>
        <strain>ATCC BAA-1114 / GMI1000</strain>
    </source>
</reference>
<feature type="chain" id="PRO_0000215737" description="ATP-dependent Clp protease adapter protein ClpS">
    <location>
        <begin position="1"/>
        <end position="108"/>
    </location>
</feature>
<protein>
    <recommendedName>
        <fullName evidence="1">ATP-dependent Clp protease adapter protein ClpS</fullName>
    </recommendedName>
</protein>
<accession>Q8XWK9</accession>
<evidence type="ECO:0000255" key="1">
    <source>
        <dbReference type="HAMAP-Rule" id="MF_00302"/>
    </source>
</evidence>
<proteinExistence type="inferred from homology"/>
<sequence length="108" mass="12203">MAIRQATTPQHDAGTVLERKEQALKPPAMYKVLLLNDDYTPMEFVVMILQQYFSKDRETATQIMLTVHREGRGVCGIYTRDIAATKVELVSTHARQAGHPLQCVMEEA</sequence>
<gene>
    <name evidence="1" type="primary">clpS</name>
    <name type="ordered locus">RSc2465</name>
    <name type="ORF">RS01140</name>
</gene>
<keyword id="KW-1185">Reference proteome</keyword>
<organism>
    <name type="scientific">Ralstonia nicotianae (strain ATCC BAA-1114 / GMI1000)</name>
    <name type="common">Ralstonia solanacearum</name>
    <dbReference type="NCBI Taxonomy" id="267608"/>
    <lineage>
        <taxon>Bacteria</taxon>
        <taxon>Pseudomonadati</taxon>
        <taxon>Pseudomonadota</taxon>
        <taxon>Betaproteobacteria</taxon>
        <taxon>Burkholderiales</taxon>
        <taxon>Burkholderiaceae</taxon>
        <taxon>Ralstonia</taxon>
        <taxon>Ralstonia solanacearum species complex</taxon>
    </lineage>
</organism>